<reference key="1">
    <citation type="journal article" date="1989" name="Nucleic Acids Res.">
        <title>Sequence of the chloroplast rps14 gene encoding the chloroplast ribosomal protein S14 from rice.</title>
        <authorList>
            <person name="Cote J.C."/>
            <person name="Wu R."/>
        </authorList>
    </citation>
    <scope>NUCLEOTIDE SEQUENCE [GENOMIC DNA]</scope>
    <source>
        <strain>cv. Labelle</strain>
        <tissue>Leaf</tissue>
    </source>
</reference>
<reference key="2">
    <citation type="journal article" date="1989" name="Mol. Gen. Genet.">
        <title>The complete sequence of the rice (Oryza sativa) chloroplast genome: intermolecular recombination between distinct tRNA genes accounts for a major plastid DNA inversion during the evolution of the cereals.</title>
        <authorList>
            <person name="Hiratsuka J."/>
            <person name="Shimada H."/>
            <person name="Whittier R."/>
            <person name="Ishibashi T."/>
            <person name="Sakamoto M."/>
            <person name="Mori M."/>
            <person name="Kondo C."/>
            <person name="Honji Y."/>
            <person name="Sun C.-R."/>
            <person name="Meng B.-Y."/>
            <person name="Li Y.-Q."/>
            <person name="Kanno A."/>
            <person name="Nishizawa Y."/>
            <person name="Hirai A."/>
            <person name="Shinozaki K."/>
            <person name="Sugiura M."/>
        </authorList>
    </citation>
    <scope>NUCLEOTIDE SEQUENCE [LARGE SCALE GENOMIC DNA]</scope>
    <source>
        <strain>cv. Nipponbare</strain>
    </source>
</reference>
<reference key="3">
    <citation type="journal article" date="2004" name="Plant Physiol.">
        <title>A comparison of rice chloroplast genomes.</title>
        <authorList>
            <person name="Tang J."/>
            <person name="Xia H."/>
            <person name="Cao M."/>
            <person name="Zhang X."/>
            <person name="Zeng W."/>
            <person name="Hu S."/>
            <person name="Tong W."/>
            <person name="Wang J."/>
            <person name="Wang J."/>
            <person name="Yu J."/>
            <person name="Yang H."/>
            <person name="Zhu L."/>
        </authorList>
    </citation>
    <scope>NUCLEOTIDE SEQUENCE [LARGE SCALE GENOMIC DNA]</scope>
    <source>
        <strain>cv. Nipponbare</strain>
    </source>
</reference>
<reference key="4">
    <citation type="journal article" date="2003" name="Science">
        <title>In-depth view of structure, activity, and evolution of rice chromosome 10.</title>
        <authorList>
            <person name="Yu Y."/>
            <person name="Rambo T."/>
            <person name="Currie J."/>
            <person name="Saski C."/>
            <person name="Kim H.-R."/>
            <person name="Collura K."/>
            <person name="Thompson S."/>
            <person name="Simmons J."/>
            <person name="Yang T.-J."/>
            <person name="Nah G."/>
            <person name="Patel A.J."/>
            <person name="Thurmond S."/>
            <person name="Henry D."/>
            <person name="Oates R."/>
            <person name="Palmer M."/>
            <person name="Pries G."/>
            <person name="Gibson J."/>
            <person name="Anderson H."/>
            <person name="Paradkar M."/>
            <person name="Crane L."/>
            <person name="Dale J."/>
            <person name="Carver M.B."/>
            <person name="Wood T."/>
            <person name="Frisch D."/>
            <person name="Engler F."/>
            <person name="Soderlund C."/>
            <person name="Palmer L.E."/>
            <person name="Teytelman L."/>
            <person name="Nascimento L."/>
            <person name="De la Bastide M."/>
            <person name="Spiegel L."/>
            <person name="Ware D."/>
            <person name="O'Shaughnessy A."/>
            <person name="Dike S."/>
            <person name="Dedhia N."/>
            <person name="Preston R."/>
            <person name="Huang E."/>
            <person name="Ferraro K."/>
            <person name="Kuit K."/>
            <person name="Miller B."/>
            <person name="Zutavern T."/>
            <person name="Katzenberger F."/>
            <person name="Muller S."/>
            <person name="Balija V."/>
            <person name="Martienssen R.A."/>
            <person name="Stein L."/>
            <person name="Minx P."/>
            <person name="Johnson D."/>
            <person name="Cordum H."/>
            <person name="Mardis E."/>
            <person name="Cheng Z."/>
            <person name="Jiang J."/>
            <person name="Wilson R."/>
            <person name="McCombie W.R."/>
            <person name="Wing R.A."/>
            <person name="Yuan Q."/>
            <person name="Ouyang S."/>
            <person name="Liu J."/>
            <person name="Jones K.M."/>
            <person name="Gansberger K."/>
            <person name="Moffat K."/>
            <person name="Hill J."/>
            <person name="Tsitrin T."/>
            <person name="Overton L."/>
            <person name="Bera J."/>
            <person name="Kim M."/>
            <person name="Jin S."/>
            <person name="Tallon L."/>
            <person name="Ciecko A."/>
            <person name="Pai G."/>
            <person name="Van Aken S."/>
            <person name="Utterback T."/>
            <person name="Reidmuller S."/>
            <person name="Bormann J."/>
            <person name="Feldblyum T."/>
            <person name="Hsiao J."/>
            <person name="Zismann V."/>
            <person name="Blunt S."/>
            <person name="de Vazeille A.R."/>
            <person name="Shaffer T."/>
            <person name="Koo H."/>
            <person name="Suh B."/>
            <person name="Yang Q."/>
            <person name="Haas B."/>
            <person name="Peterson J."/>
            <person name="Pertea M."/>
            <person name="Volfovsky N."/>
            <person name="Wortman J."/>
            <person name="White O."/>
            <person name="Salzberg S.L."/>
            <person name="Fraser C.M."/>
            <person name="Buell C.R."/>
            <person name="Messing J."/>
            <person name="Song R."/>
            <person name="Fuks G."/>
            <person name="Llaca V."/>
            <person name="Kovchak S."/>
            <person name="Young S."/>
            <person name="Bowers J.E."/>
            <person name="Paterson A.H."/>
            <person name="Johns M.A."/>
            <person name="Mao L."/>
            <person name="Pan H."/>
            <person name="Dean R.A."/>
        </authorList>
    </citation>
    <scope>NUCLEOTIDE SEQUENCE [LARGE SCALE GENOMIC DNA]</scope>
    <source>
        <strain>cv. Nipponbare</strain>
    </source>
</reference>
<evidence type="ECO:0000255" key="1">
    <source>
        <dbReference type="HAMAP-Rule" id="MF_00537"/>
    </source>
</evidence>
<evidence type="ECO:0000305" key="2"/>
<sequence length="103" mass="12254">MAKKSLIQRERKRQKLEQKYHLIRRSSKKKIRSKVYPLSLSEKTKMREKLQSLPRNSAPTRLHRRCFLTGRPRANYRDFGLSGHILREMVYACLLPGATRSSW</sequence>
<geneLocation type="chloroplast"/>
<feature type="chain" id="PRO_0000290063" description="Small ribosomal subunit protein uS14c">
    <location>
        <begin position="1"/>
        <end position="103"/>
    </location>
</feature>
<keyword id="KW-0150">Chloroplast</keyword>
<keyword id="KW-0934">Plastid</keyword>
<keyword id="KW-1185">Reference proteome</keyword>
<keyword id="KW-0687">Ribonucleoprotein</keyword>
<keyword id="KW-0689">Ribosomal protein</keyword>
<keyword id="KW-0694">RNA-binding</keyword>
<keyword id="KW-0699">rRNA-binding</keyword>
<dbReference type="EMBL" id="X13208">
    <property type="protein sequence ID" value="CAA31596.1"/>
    <property type="molecule type" value="Genomic_DNA"/>
</dbReference>
<dbReference type="EMBL" id="X15901">
    <property type="protein sequence ID" value="CAA33994.1"/>
    <property type="molecule type" value="Genomic_DNA"/>
</dbReference>
<dbReference type="EMBL" id="AY522330">
    <property type="protein sequence ID" value="AAS46119.1"/>
    <property type="molecule type" value="Genomic_DNA"/>
</dbReference>
<dbReference type="EMBL" id="AC074232">
    <property type="protein sequence ID" value="AAM12474.1"/>
    <property type="molecule type" value="Genomic_DNA"/>
</dbReference>
<dbReference type="EMBL" id="AC092750">
    <property type="protein sequence ID" value="AAM08598.1"/>
    <property type="molecule type" value="Genomic_DNA"/>
</dbReference>
<dbReference type="EMBL" id="AC122148">
    <property type="protein sequence ID" value="AAM48263.1"/>
    <property type="molecule type" value="Genomic_DNA"/>
</dbReference>
<dbReference type="PIR" id="JQ0221">
    <property type="entry name" value="R3RZ14"/>
</dbReference>
<dbReference type="RefSeq" id="NP_039381.1">
    <property type="nucleotide sequence ID" value="NC_001320.1"/>
</dbReference>
<dbReference type="RefSeq" id="YP_009305302.1">
    <property type="nucleotide sequence ID" value="NC_031333.1"/>
</dbReference>
<dbReference type="SMR" id="P0C467"/>
<dbReference type="FunCoup" id="P0C467">
    <property type="interactions" value="1"/>
</dbReference>
<dbReference type="STRING" id="39947.P0C467"/>
<dbReference type="PaxDb" id="39947-P0C467"/>
<dbReference type="EnsemblPlants" id="transcript-rps14">
    <property type="protein sequence ID" value="cds-CAA33994.1"/>
    <property type="gene ID" value="gene-rps14"/>
</dbReference>
<dbReference type="GeneID" id="29141361"/>
<dbReference type="GeneID" id="3131436"/>
<dbReference type="Gramene" id="transcript-rps14">
    <property type="protein sequence ID" value="cds-CAA33994.1"/>
    <property type="gene ID" value="gene-rps14"/>
</dbReference>
<dbReference type="KEGG" id="dosa:rps14"/>
<dbReference type="KEGG" id="osa:3131436"/>
<dbReference type="InParanoid" id="P0C467"/>
<dbReference type="OrthoDB" id="413436at2759"/>
<dbReference type="Proteomes" id="UP000000763">
    <property type="component" value="Chromosome 10"/>
</dbReference>
<dbReference type="Proteomes" id="UP000059680">
    <property type="component" value="Chloroplast"/>
</dbReference>
<dbReference type="GO" id="GO:0009507">
    <property type="term" value="C:chloroplast"/>
    <property type="evidence" value="ECO:0007669"/>
    <property type="project" value="UniProtKB-SubCell"/>
</dbReference>
<dbReference type="GO" id="GO:0009536">
    <property type="term" value="C:plastid"/>
    <property type="evidence" value="ECO:0000305"/>
    <property type="project" value="Gramene"/>
</dbReference>
<dbReference type="GO" id="GO:0015935">
    <property type="term" value="C:small ribosomal subunit"/>
    <property type="evidence" value="ECO:0000318"/>
    <property type="project" value="GO_Central"/>
</dbReference>
<dbReference type="GO" id="GO:0019843">
    <property type="term" value="F:rRNA binding"/>
    <property type="evidence" value="ECO:0007669"/>
    <property type="project" value="UniProtKB-UniRule"/>
</dbReference>
<dbReference type="GO" id="GO:0003735">
    <property type="term" value="F:structural constituent of ribosome"/>
    <property type="evidence" value="ECO:0000318"/>
    <property type="project" value="GO_Central"/>
</dbReference>
<dbReference type="GO" id="GO:0006412">
    <property type="term" value="P:translation"/>
    <property type="evidence" value="ECO:0000318"/>
    <property type="project" value="GO_Central"/>
</dbReference>
<dbReference type="FunFam" id="1.10.287.1480:FF:000001">
    <property type="entry name" value="30S ribosomal protein S14"/>
    <property type="match status" value="1"/>
</dbReference>
<dbReference type="Gene3D" id="1.10.287.1480">
    <property type="match status" value="1"/>
</dbReference>
<dbReference type="HAMAP" id="MF_00537">
    <property type="entry name" value="Ribosomal_uS14_1"/>
    <property type="match status" value="1"/>
</dbReference>
<dbReference type="InterPro" id="IPR001209">
    <property type="entry name" value="Ribosomal_uS14"/>
</dbReference>
<dbReference type="InterPro" id="IPR023036">
    <property type="entry name" value="Ribosomal_uS14_bac/plastid"/>
</dbReference>
<dbReference type="InterPro" id="IPR018271">
    <property type="entry name" value="Ribosomal_uS14_CS"/>
</dbReference>
<dbReference type="NCBIfam" id="NF006477">
    <property type="entry name" value="PRK08881.1"/>
    <property type="match status" value="1"/>
</dbReference>
<dbReference type="PANTHER" id="PTHR19836">
    <property type="entry name" value="30S RIBOSOMAL PROTEIN S14"/>
    <property type="match status" value="1"/>
</dbReference>
<dbReference type="PANTHER" id="PTHR19836:SF19">
    <property type="entry name" value="SMALL RIBOSOMAL SUBUNIT PROTEIN US14M"/>
    <property type="match status" value="1"/>
</dbReference>
<dbReference type="Pfam" id="PF00253">
    <property type="entry name" value="Ribosomal_S14"/>
    <property type="match status" value="1"/>
</dbReference>
<dbReference type="SUPFAM" id="SSF57716">
    <property type="entry name" value="Glucocorticoid receptor-like (DNA-binding domain)"/>
    <property type="match status" value="1"/>
</dbReference>
<dbReference type="PROSITE" id="PS00527">
    <property type="entry name" value="RIBOSOMAL_S14"/>
    <property type="match status" value="1"/>
</dbReference>
<gene>
    <name evidence="1" type="primary">rps14</name>
    <name type="ORF">Nip048</name>
</gene>
<accession>P0C467</accession>
<accession>P09096</accession>
<accession>Q6QY76</accession>
<accession>Q7G7B6</accession>
<proteinExistence type="inferred from homology"/>
<organism>
    <name type="scientific">Oryza sativa subsp. japonica</name>
    <name type="common">Rice</name>
    <dbReference type="NCBI Taxonomy" id="39947"/>
    <lineage>
        <taxon>Eukaryota</taxon>
        <taxon>Viridiplantae</taxon>
        <taxon>Streptophyta</taxon>
        <taxon>Embryophyta</taxon>
        <taxon>Tracheophyta</taxon>
        <taxon>Spermatophyta</taxon>
        <taxon>Magnoliopsida</taxon>
        <taxon>Liliopsida</taxon>
        <taxon>Poales</taxon>
        <taxon>Poaceae</taxon>
        <taxon>BOP clade</taxon>
        <taxon>Oryzoideae</taxon>
        <taxon>Oryzeae</taxon>
        <taxon>Oryzinae</taxon>
        <taxon>Oryza</taxon>
        <taxon>Oryza sativa</taxon>
    </lineage>
</organism>
<comment type="function">
    <text evidence="1">Binds 16S rRNA, required for the assembly of 30S particles.</text>
</comment>
<comment type="subunit">
    <text evidence="1">Part of the 30S ribosomal subunit.</text>
</comment>
<comment type="subcellular location">
    <subcellularLocation>
        <location>Plastid</location>
        <location>Chloroplast</location>
    </subcellularLocation>
</comment>
<comment type="similarity">
    <text evidence="1">Belongs to the universal ribosomal protein uS14 family.</text>
</comment>
<comment type="caution">
    <text evidence="2">A stretch of the chloroplast genome is duplicated within chromosome 10 resulting in the duplication of the gene. The expression of this duplicated gene has not been demonstrated.</text>
</comment>
<protein>
    <recommendedName>
        <fullName evidence="1">Small ribosomal subunit protein uS14c</fullName>
    </recommendedName>
    <alternativeName>
        <fullName evidence="2">30S ribosomal protein S14, chloroplastic</fullName>
    </alternativeName>
</protein>
<name>RR14_ORYSJ</name>